<proteinExistence type="inferred from homology"/>
<keyword id="KW-1003">Cell membrane</keyword>
<keyword id="KW-0449">Lipoprotein</keyword>
<keyword id="KW-0472">Membrane</keyword>
<keyword id="KW-0564">Palmitate</keyword>
<keyword id="KW-1185">Reference proteome</keyword>
<keyword id="KW-0732">Signal</keyword>
<name>Y402_STAA8</name>
<gene>
    <name type="ordered locus">SAOUHSC_00402</name>
</gene>
<comment type="subcellular location">
    <subcellularLocation>
        <location evidence="1">Cell membrane</location>
        <topology evidence="1">Lipid-anchor</topology>
    </subcellularLocation>
</comment>
<comment type="similarity">
    <text evidence="2">Belongs to the staphylococcal tandem lipoprotein family.</text>
</comment>
<comment type="sequence caution" evidence="2">
    <conflict type="erroneous initiation">
        <sequence resource="EMBL-CDS" id="ABD29565"/>
    </conflict>
</comment>
<dbReference type="EMBL" id="CP000253">
    <property type="protein sequence ID" value="ABD29565.1"/>
    <property type="status" value="ALT_INIT"/>
    <property type="molecule type" value="Genomic_DNA"/>
</dbReference>
<dbReference type="RefSeq" id="WP_000875823.1">
    <property type="nucleotide sequence ID" value="NC_007795.1"/>
</dbReference>
<dbReference type="RefSeq" id="WP_014362535.1">
    <property type="nucleotide sequence ID" value="NZ_LS483365.1"/>
</dbReference>
<dbReference type="RefSeq" id="YP_498989.1">
    <property type="nucleotide sequence ID" value="NC_007795.1"/>
</dbReference>
<dbReference type="SMR" id="Q2G0X1"/>
<dbReference type="STRING" id="93061.SAOUHSC_00402"/>
<dbReference type="GeneID" id="3920561"/>
<dbReference type="KEGG" id="sao:SAOUHSC_00402"/>
<dbReference type="PATRIC" id="fig|93061.5.peg.370"/>
<dbReference type="HOGENOM" id="CLU_071589_0_1_9"/>
<dbReference type="OrthoDB" id="2189886at2"/>
<dbReference type="Proteomes" id="UP000008816">
    <property type="component" value="Chromosome"/>
</dbReference>
<dbReference type="GO" id="GO:0005886">
    <property type="term" value="C:plasma membrane"/>
    <property type="evidence" value="ECO:0007669"/>
    <property type="project" value="UniProtKB-SubCell"/>
</dbReference>
<dbReference type="Gene3D" id="2.50.20.40">
    <property type="match status" value="1"/>
</dbReference>
<dbReference type="InterPro" id="IPR007595">
    <property type="entry name" value="Csa"/>
</dbReference>
<dbReference type="InterPro" id="IPR038641">
    <property type="entry name" value="Csa_sf"/>
</dbReference>
<dbReference type="NCBIfam" id="TIGR01742">
    <property type="entry name" value="SA_tandem_lipo"/>
    <property type="match status" value="1"/>
</dbReference>
<dbReference type="Pfam" id="PF04507">
    <property type="entry name" value="DUF576"/>
    <property type="match status" value="1"/>
</dbReference>
<dbReference type="PROSITE" id="PS51257">
    <property type="entry name" value="PROKAR_LIPOPROTEIN"/>
    <property type="match status" value="1"/>
</dbReference>
<feature type="signal peptide" evidence="1">
    <location>
        <begin position="1"/>
        <end position="22"/>
    </location>
</feature>
<feature type="chain" id="PRO_0000282092" description="Uncharacterized lipoprotein SAOUHSC_00402">
    <location>
        <begin position="23"/>
        <end position="262"/>
    </location>
</feature>
<feature type="lipid moiety-binding region" description="N-palmitoyl cysteine" evidence="1">
    <location>
        <position position="23"/>
    </location>
</feature>
<feature type="lipid moiety-binding region" description="S-diacylglycerol cysteine" evidence="1">
    <location>
        <position position="23"/>
    </location>
</feature>
<organism>
    <name type="scientific">Staphylococcus aureus (strain NCTC 8325 / PS 47)</name>
    <dbReference type="NCBI Taxonomy" id="93061"/>
    <lineage>
        <taxon>Bacteria</taxon>
        <taxon>Bacillati</taxon>
        <taxon>Bacillota</taxon>
        <taxon>Bacilli</taxon>
        <taxon>Bacillales</taxon>
        <taxon>Staphylococcaceae</taxon>
        <taxon>Staphylococcus</taxon>
    </lineage>
</organism>
<evidence type="ECO:0000255" key="1">
    <source>
        <dbReference type="PROSITE-ProRule" id="PRU00303"/>
    </source>
</evidence>
<evidence type="ECO:0000305" key="2"/>
<sequence>MGYLKRFALYISVMILIFAIAGCGKGNETKEDSKEEQIKKSFAKTLDMYPIKNLEDLYDKEGYRDGEFKKGDKGMWTIYTDFAKSNKQGGLSNEGMVLYLDRNTRTAKGHYFVKTFYNKGKFPDRKNYKVEMKNNKIILLDKVEDTNLKKRIENFKFFGQYANLKELKNYNNGDVSINENVPSYDAKFKMSNKDENVKQLRSRYNIPTDKAPVLKMHIDGNLKGSSVGYKKLEIDFSKGGKSDLSVIDSLNFQPAKVDEDDE</sequence>
<reference key="1">
    <citation type="book" date="2006" name="Gram positive pathogens, 2nd edition">
        <title>The Staphylococcus aureus NCTC 8325 genome.</title>
        <editorList>
            <person name="Fischetti V."/>
            <person name="Novick R."/>
            <person name="Ferretti J."/>
            <person name="Portnoy D."/>
            <person name="Rood J."/>
        </editorList>
        <authorList>
            <person name="Gillaspy A.F."/>
            <person name="Worrell V."/>
            <person name="Orvis J."/>
            <person name="Roe B.A."/>
            <person name="Dyer D.W."/>
            <person name="Iandolo J.J."/>
        </authorList>
    </citation>
    <scope>NUCLEOTIDE SEQUENCE [LARGE SCALE GENOMIC DNA]</scope>
    <source>
        <strain>NCTC 8325 / PS 47</strain>
    </source>
</reference>
<protein>
    <recommendedName>
        <fullName>Uncharacterized lipoprotein SAOUHSC_00402</fullName>
    </recommendedName>
</protein>
<accession>Q2G0X1</accession>